<protein>
    <recommendedName>
        <fullName evidence="1">3-phenylpropionate/cinnamic acid dioxygenase ferredoxin--NAD(+) reductase component</fullName>
        <ecNumber evidence="1">1.18.1.3</ecNumber>
    </recommendedName>
</protein>
<dbReference type="EC" id="1.18.1.3" evidence="1"/>
<dbReference type="EMBL" id="AP009240">
    <property type="protein sequence ID" value="BAG78353.1"/>
    <property type="molecule type" value="Genomic_DNA"/>
</dbReference>
<dbReference type="RefSeq" id="WP_000660797.1">
    <property type="nucleotide sequence ID" value="NC_011415.1"/>
</dbReference>
<dbReference type="SMR" id="B6I5B5"/>
<dbReference type="GeneID" id="75206235"/>
<dbReference type="KEGG" id="ecy:ECSE_2829"/>
<dbReference type="HOGENOM" id="CLU_003291_4_0_6"/>
<dbReference type="UniPathway" id="UPA00714"/>
<dbReference type="Proteomes" id="UP000008199">
    <property type="component" value="Chromosome"/>
</dbReference>
<dbReference type="GO" id="GO:0005737">
    <property type="term" value="C:cytoplasm"/>
    <property type="evidence" value="ECO:0007669"/>
    <property type="project" value="TreeGrafter"/>
</dbReference>
<dbReference type="GO" id="GO:0008695">
    <property type="term" value="F:3-phenylpropionate dioxygenase activity"/>
    <property type="evidence" value="ECO:0007669"/>
    <property type="project" value="UniProtKB-UniRule"/>
</dbReference>
<dbReference type="GO" id="GO:0008860">
    <property type="term" value="F:ferredoxin-NAD+ reductase activity"/>
    <property type="evidence" value="ECO:0007669"/>
    <property type="project" value="UniProtKB-EC"/>
</dbReference>
<dbReference type="GO" id="GO:0016651">
    <property type="term" value="F:oxidoreductase activity, acting on NAD(P)H"/>
    <property type="evidence" value="ECO:0007669"/>
    <property type="project" value="TreeGrafter"/>
</dbReference>
<dbReference type="GO" id="GO:0019380">
    <property type="term" value="P:3-phenylpropionate catabolic process"/>
    <property type="evidence" value="ECO:0007669"/>
    <property type="project" value="UniProtKB-UniRule"/>
</dbReference>
<dbReference type="FunFam" id="3.30.390.30:FF:000010">
    <property type="entry name" value="3-phenylpropionate/cinnamic acid dioxygenase ferredoxin--NAD(+) reductase component"/>
    <property type="match status" value="1"/>
</dbReference>
<dbReference type="FunFam" id="3.50.50.60:FF:000088">
    <property type="entry name" value="3-phenylpropionate/cinnamic acid dioxygenase ferredoxin--NAD(+) reductase component"/>
    <property type="match status" value="1"/>
</dbReference>
<dbReference type="Gene3D" id="3.30.390.30">
    <property type="match status" value="1"/>
</dbReference>
<dbReference type="Gene3D" id="3.50.50.60">
    <property type="entry name" value="FAD/NAD(P)-binding domain"/>
    <property type="match status" value="2"/>
</dbReference>
<dbReference type="HAMAP" id="MF_01651">
    <property type="entry name" value="HcaD"/>
    <property type="match status" value="1"/>
</dbReference>
<dbReference type="InterPro" id="IPR050446">
    <property type="entry name" value="FAD-oxidoreductase/Apoptosis"/>
</dbReference>
<dbReference type="InterPro" id="IPR036188">
    <property type="entry name" value="FAD/NAD-bd_sf"/>
</dbReference>
<dbReference type="InterPro" id="IPR023753">
    <property type="entry name" value="FAD/NAD-binding_dom"/>
</dbReference>
<dbReference type="InterPro" id="IPR016156">
    <property type="entry name" value="FAD/NAD-linked_Rdtase_dimer_sf"/>
</dbReference>
<dbReference type="InterPro" id="IPR023744">
    <property type="entry name" value="HcaD"/>
</dbReference>
<dbReference type="InterPro" id="IPR028202">
    <property type="entry name" value="Reductase_C"/>
</dbReference>
<dbReference type="InterPro" id="IPR053382">
    <property type="entry name" value="Ring-hydroxylating_dioxygenase"/>
</dbReference>
<dbReference type="NCBIfam" id="NF042949">
    <property type="entry name" value="3PPDioc_HcaD"/>
    <property type="match status" value="1"/>
</dbReference>
<dbReference type="NCBIfam" id="NF007286">
    <property type="entry name" value="PRK09754.1"/>
    <property type="match status" value="1"/>
</dbReference>
<dbReference type="PANTHER" id="PTHR43557">
    <property type="entry name" value="APOPTOSIS-INDUCING FACTOR 1"/>
    <property type="match status" value="1"/>
</dbReference>
<dbReference type="PANTHER" id="PTHR43557:SF2">
    <property type="entry name" value="RIESKE DOMAIN-CONTAINING PROTEIN-RELATED"/>
    <property type="match status" value="1"/>
</dbReference>
<dbReference type="Pfam" id="PF07992">
    <property type="entry name" value="Pyr_redox_2"/>
    <property type="match status" value="1"/>
</dbReference>
<dbReference type="Pfam" id="PF14759">
    <property type="entry name" value="Reductase_C"/>
    <property type="match status" value="1"/>
</dbReference>
<dbReference type="PRINTS" id="PR00368">
    <property type="entry name" value="FADPNR"/>
</dbReference>
<dbReference type="PRINTS" id="PR00411">
    <property type="entry name" value="PNDRDTASEI"/>
</dbReference>
<dbReference type="SUPFAM" id="SSF51905">
    <property type="entry name" value="FAD/NAD(P)-binding domain"/>
    <property type="match status" value="1"/>
</dbReference>
<dbReference type="SUPFAM" id="SSF55424">
    <property type="entry name" value="FAD/NAD-linked reductases, dimerisation (C-terminal) domain"/>
    <property type="match status" value="1"/>
</dbReference>
<reference key="1">
    <citation type="journal article" date="2008" name="DNA Res.">
        <title>Complete genome sequence and comparative analysis of the wild-type commensal Escherichia coli strain SE11 isolated from a healthy adult.</title>
        <authorList>
            <person name="Oshima K."/>
            <person name="Toh H."/>
            <person name="Ogura Y."/>
            <person name="Sasamoto H."/>
            <person name="Morita H."/>
            <person name="Park S.-H."/>
            <person name="Ooka T."/>
            <person name="Iyoda S."/>
            <person name="Taylor T.D."/>
            <person name="Hayashi T."/>
            <person name="Itoh K."/>
            <person name="Hattori M."/>
        </authorList>
    </citation>
    <scope>NUCLEOTIDE SEQUENCE [LARGE SCALE GENOMIC DNA]</scope>
    <source>
        <strain>SE11</strain>
    </source>
</reference>
<proteinExistence type="inferred from homology"/>
<keyword id="KW-0058">Aromatic hydrocarbons catabolism</keyword>
<keyword id="KW-0274">FAD</keyword>
<keyword id="KW-0285">Flavoprotein</keyword>
<keyword id="KW-0520">NAD</keyword>
<keyword id="KW-0560">Oxidoreductase</keyword>
<comment type="function">
    <text evidence="1">Part of the multicomponent 3-phenylpropionate dioxygenase, that converts 3-phenylpropionic acid (PP) and cinnamic acid (CI) into 3-phenylpropionate-dihydrodiol (PP-dihydrodiol) and cinnamic acid-dihydrodiol (CI-dihydrodiol), respectively.</text>
</comment>
<comment type="catalytic activity">
    <reaction evidence="1">
        <text>2 reduced [2Fe-2S]-[ferredoxin] + NAD(+) + H(+) = 2 oxidized [2Fe-2S]-[ferredoxin] + NADH</text>
        <dbReference type="Rhea" id="RHEA:16521"/>
        <dbReference type="Rhea" id="RHEA-COMP:10000"/>
        <dbReference type="Rhea" id="RHEA-COMP:10001"/>
        <dbReference type="ChEBI" id="CHEBI:15378"/>
        <dbReference type="ChEBI" id="CHEBI:33737"/>
        <dbReference type="ChEBI" id="CHEBI:33738"/>
        <dbReference type="ChEBI" id="CHEBI:57540"/>
        <dbReference type="ChEBI" id="CHEBI:57945"/>
        <dbReference type="EC" id="1.18.1.3"/>
    </reaction>
</comment>
<comment type="cofactor">
    <cofactor evidence="1">
        <name>FAD</name>
        <dbReference type="ChEBI" id="CHEBI:57692"/>
    </cofactor>
</comment>
<comment type="pathway">
    <text evidence="1">Aromatic compound metabolism; 3-phenylpropanoate degradation.</text>
</comment>
<comment type="subunit">
    <text evidence="1">This dioxygenase system consists of four proteins: the two subunits of the hydroxylase component (HcaE and HcaF), a ferredoxin (HcaC) and a ferredoxin reductase (HcaD).</text>
</comment>
<comment type="similarity">
    <text evidence="1">Belongs to the bacterial ring-hydroxylating dioxygenase ferredoxin reductase family.</text>
</comment>
<organism>
    <name type="scientific">Escherichia coli (strain SE11)</name>
    <dbReference type="NCBI Taxonomy" id="409438"/>
    <lineage>
        <taxon>Bacteria</taxon>
        <taxon>Pseudomonadati</taxon>
        <taxon>Pseudomonadota</taxon>
        <taxon>Gammaproteobacteria</taxon>
        <taxon>Enterobacterales</taxon>
        <taxon>Enterobacteriaceae</taxon>
        <taxon>Escherichia</taxon>
    </lineage>
</organism>
<gene>
    <name evidence="1" type="primary">hcaD</name>
    <name type="ordered locus">ECSE_2829</name>
</gene>
<sequence>MKEKTIIIVGGGQAAAMAAASLRQQGFTGELHLFSDERHLPYERPPLSKSMLLEDSPQLQQVLPANWWQENNVHLHSGVTIKTLGRDTRELVLTNGESWHWDQLFIATGAAARPLPLLDALGERCFTLRHAGDAARLREVLQPERSVVIVGAGTIGLELAASATQRRCKVTVIELAATVMGRNAPPPVQRYLLQRHQQAGVRILLNNAIEHVVDGEKVELTLQSGETLQADVVIYGIGISANEQLAREANLDTANGIVIDEACRTCDPAIFAGGDVAITRLDNGALHRCESWENANNQAQIAAAAMLGLPLPLLPPPWFWSDQYSDNLQFIGDMRGDDWLCRGNPETQKAIWFNLQNGVLIGAVTLNQGREIRPIRKWIQSGKTFDAKLLIDENIALKSL</sequence>
<accession>B6I5B5</accession>
<name>HCAD_ECOSE</name>
<feature type="chain" id="PRO_1000186987" description="3-phenylpropionate/cinnamic acid dioxygenase ferredoxin--NAD(+) reductase component">
    <location>
        <begin position="1"/>
        <end position="400"/>
    </location>
</feature>
<feature type="binding site" evidence="1">
    <location>
        <begin position="5"/>
        <end position="36"/>
    </location>
    <ligand>
        <name>FAD</name>
        <dbReference type="ChEBI" id="CHEBI:57692"/>
    </ligand>
</feature>
<feature type="binding site" evidence="1">
    <location>
        <begin position="146"/>
        <end position="174"/>
    </location>
    <ligand>
        <name>NAD(+)</name>
        <dbReference type="ChEBI" id="CHEBI:57540"/>
    </ligand>
</feature>
<evidence type="ECO:0000255" key="1">
    <source>
        <dbReference type="HAMAP-Rule" id="MF_01651"/>
    </source>
</evidence>